<evidence type="ECO:0000255" key="1">
    <source>
        <dbReference type="HAMAP-Rule" id="MF_01336"/>
    </source>
</evidence>
<evidence type="ECO:0000305" key="2"/>
<organism>
    <name type="scientific">Escherichia coli (strain SE11)</name>
    <dbReference type="NCBI Taxonomy" id="409438"/>
    <lineage>
        <taxon>Bacteria</taxon>
        <taxon>Pseudomonadati</taxon>
        <taxon>Pseudomonadota</taxon>
        <taxon>Gammaproteobacteria</taxon>
        <taxon>Enterobacterales</taxon>
        <taxon>Enterobacteriaceae</taxon>
        <taxon>Escherichia</taxon>
    </lineage>
</organism>
<gene>
    <name evidence="1" type="primary">rplY</name>
    <name type="ordered locus">ECSE_2454</name>
</gene>
<keyword id="KW-0687">Ribonucleoprotein</keyword>
<keyword id="KW-0689">Ribosomal protein</keyword>
<keyword id="KW-0694">RNA-binding</keyword>
<keyword id="KW-0699">rRNA-binding</keyword>
<name>RL25_ECOSE</name>
<comment type="function">
    <text evidence="1">This is one of the proteins that binds to the 5S RNA in the ribosome where it forms part of the central protuberance.</text>
</comment>
<comment type="subunit">
    <text evidence="1">Part of the 50S ribosomal subunit; part of the 5S rRNA/L5/L18/L25 subcomplex. Contacts the 5S rRNA. Binds to the 5S rRNA independently of L5 and L18.</text>
</comment>
<comment type="similarity">
    <text evidence="1">Belongs to the bacterial ribosomal protein bL25 family.</text>
</comment>
<proteinExistence type="inferred from homology"/>
<dbReference type="EMBL" id="AP009240">
    <property type="protein sequence ID" value="BAG77978.1"/>
    <property type="molecule type" value="Genomic_DNA"/>
</dbReference>
<dbReference type="RefSeq" id="WP_000494183.1">
    <property type="nucleotide sequence ID" value="NC_011415.1"/>
</dbReference>
<dbReference type="SMR" id="B6I184"/>
<dbReference type="GeneID" id="93774996"/>
<dbReference type="KEGG" id="ecy:ECSE_2454"/>
<dbReference type="HOGENOM" id="CLU_137946_0_0_6"/>
<dbReference type="Proteomes" id="UP000008199">
    <property type="component" value="Chromosome"/>
</dbReference>
<dbReference type="GO" id="GO:0022625">
    <property type="term" value="C:cytosolic large ribosomal subunit"/>
    <property type="evidence" value="ECO:0007669"/>
    <property type="project" value="TreeGrafter"/>
</dbReference>
<dbReference type="GO" id="GO:0008097">
    <property type="term" value="F:5S rRNA binding"/>
    <property type="evidence" value="ECO:0007669"/>
    <property type="project" value="InterPro"/>
</dbReference>
<dbReference type="GO" id="GO:0003735">
    <property type="term" value="F:structural constituent of ribosome"/>
    <property type="evidence" value="ECO:0007669"/>
    <property type="project" value="InterPro"/>
</dbReference>
<dbReference type="GO" id="GO:0006412">
    <property type="term" value="P:translation"/>
    <property type="evidence" value="ECO:0007669"/>
    <property type="project" value="UniProtKB-UniRule"/>
</dbReference>
<dbReference type="CDD" id="cd00495">
    <property type="entry name" value="Ribosomal_L25_TL5_CTC"/>
    <property type="match status" value="1"/>
</dbReference>
<dbReference type="FunFam" id="2.40.240.10:FF:000002">
    <property type="entry name" value="50S ribosomal protein L25"/>
    <property type="match status" value="1"/>
</dbReference>
<dbReference type="Gene3D" id="2.40.240.10">
    <property type="entry name" value="Ribosomal Protein L25, Chain P"/>
    <property type="match status" value="1"/>
</dbReference>
<dbReference type="HAMAP" id="MF_01336">
    <property type="entry name" value="Ribosomal_bL25"/>
    <property type="match status" value="1"/>
</dbReference>
<dbReference type="InterPro" id="IPR020056">
    <property type="entry name" value="Rbsml_bL25/Gln-tRNA_synth_N"/>
</dbReference>
<dbReference type="InterPro" id="IPR011035">
    <property type="entry name" value="Ribosomal_bL25/Gln-tRNA_synth"/>
</dbReference>
<dbReference type="InterPro" id="IPR020055">
    <property type="entry name" value="Ribosomal_bL25_short"/>
</dbReference>
<dbReference type="InterPro" id="IPR029751">
    <property type="entry name" value="Ribosomal_L25_dom"/>
</dbReference>
<dbReference type="InterPro" id="IPR020930">
    <property type="entry name" value="Ribosomal_uL5_bac-type"/>
</dbReference>
<dbReference type="NCBIfam" id="NF004612">
    <property type="entry name" value="PRK05943.1"/>
    <property type="match status" value="1"/>
</dbReference>
<dbReference type="PANTHER" id="PTHR33284">
    <property type="entry name" value="RIBOSOMAL PROTEIN L25/GLN-TRNA SYNTHETASE, ANTI-CODON-BINDING DOMAIN-CONTAINING PROTEIN"/>
    <property type="match status" value="1"/>
</dbReference>
<dbReference type="PANTHER" id="PTHR33284:SF1">
    <property type="entry name" value="RIBOSOMAL PROTEIN L25_GLN-TRNA SYNTHETASE, ANTI-CODON-BINDING DOMAIN-CONTAINING PROTEIN"/>
    <property type="match status" value="1"/>
</dbReference>
<dbReference type="Pfam" id="PF01386">
    <property type="entry name" value="Ribosomal_L25p"/>
    <property type="match status" value="1"/>
</dbReference>
<dbReference type="SUPFAM" id="SSF50715">
    <property type="entry name" value="Ribosomal protein L25-like"/>
    <property type="match status" value="1"/>
</dbReference>
<sequence length="94" mass="10693">MFTINAEVRKEQGKGASRRLRAANKFPAIIYGGKEAPLAIELDHDKVMNMQAKAEFYSEVLTIVVDGKEIKVKAQDVQRHPYKPKLQHIDFVRA</sequence>
<accession>B6I184</accession>
<reference key="1">
    <citation type="journal article" date="2008" name="DNA Res.">
        <title>Complete genome sequence and comparative analysis of the wild-type commensal Escherichia coli strain SE11 isolated from a healthy adult.</title>
        <authorList>
            <person name="Oshima K."/>
            <person name="Toh H."/>
            <person name="Ogura Y."/>
            <person name="Sasamoto H."/>
            <person name="Morita H."/>
            <person name="Park S.-H."/>
            <person name="Ooka T."/>
            <person name="Iyoda S."/>
            <person name="Taylor T.D."/>
            <person name="Hayashi T."/>
            <person name="Itoh K."/>
            <person name="Hattori M."/>
        </authorList>
    </citation>
    <scope>NUCLEOTIDE SEQUENCE [LARGE SCALE GENOMIC DNA]</scope>
    <source>
        <strain>SE11</strain>
    </source>
</reference>
<protein>
    <recommendedName>
        <fullName evidence="1">Large ribosomal subunit protein bL25</fullName>
    </recommendedName>
    <alternativeName>
        <fullName evidence="2">50S ribosomal protein L25</fullName>
    </alternativeName>
</protein>
<feature type="chain" id="PRO_1000142582" description="Large ribosomal subunit protein bL25">
    <location>
        <begin position="1"/>
        <end position="94"/>
    </location>
</feature>